<reference key="1">
    <citation type="submission" date="2007-06" db="EMBL/GenBank/DDBJ databases">
        <title>Complete sequence of Clostridium beijerinckii NCIMB 8052.</title>
        <authorList>
            <consortium name="US DOE Joint Genome Institute"/>
            <person name="Copeland A."/>
            <person name="Lucas S."/>
            <person name="Lapidus A."/>
            <person name="Barry K."/>
            <person name="Detter J.C."/>
            <person name="Glavina del Rio T."/>
            <person name="Hammon N."/>
            <person name="Israni S."/>
            <person name="Dalin E."/>
            <person name="Tice H."/>
            <person name="Pitluck S."/>
            <person name="Sims D."/>
            <person name="Brettin T."/>
            <person name="Bruce D."/>
            <person name="Tapia R."/>
            <person name="Brainard J."/>
            <person name="Schmutz J."/>
            <person name="Larimer F."/>
            <person name="Land M."/>
            <person name="Hauser L."/>
            <person name="Kyrpides N."/>
            <person name="Mikhailova N."/>
            <person name="Bennet G."/>
            <person name="Cann I."/>
            <person name="Chen J.-S."/>
            <person name="Contreras A.L."/>
            <person name="Jones D."/>
            <person name="Kashket E."/>
            <person name="Mitchell W."/>
            <person name="Stoddard S."/>
            <person name="Schwarz W."/>
            <person name="Qureshi N."/>
            <person name="Young M."/>
            <person name="Shi Z."/>
            <person name="Ezeji T."/>
            <person name="White B."/>
            <person name="Blaschek H."/>
            <person name="Richardson P."/>
        </authorList>
    </citation>
    <scope>NUCLEOTIDE SEQUENCE [LARGE SCALE GENOMIC DNA]</scope>
    <source>
        <strain>ATCC 51743 / NCIMB 8052</strain>
    </source>
</reference>
<feature type="chain" id="PRO_1000095705" description="Tryptophan synthase alpha chain">
    <location>
        <begin position="1"/>
        <end position="258"/>
    </location>
</feature>
<feature type="active site" description="Proton acceptor" evidence="1">
    <location>
        <position position="50"/>
    </location>
</feature>
<feature type="active site" description="Proton acceptor" evidence="1">
    <location>
        <position position="61"/>
    </location>
</feature>
<accession>A6LU97</accession>
<protein>
    <recommendedName>
        <fullName evidence="1">Tryptophan synthase alpha chain</fullName>
        <ecNumber evidence="1">4.2.1.20</ecNumber>
    </recommendedName>
</protein>
<organism>
    <name type="scientific">Clostridium beijerinckii (strain ATCC 51743 / NCIMB 8052)</name>
    <name type="common">Clostridium acetobutylicum</name>
    <dbReference type="NCBI Taxonomy" id="290402"/>
    <lineage>
        <taxon>Bacteria</taxon>
        <taxon>Bacillati</taxon>
        <taxon>Bacillota</taxon>
        <taxon>Clostridia</taxon>
        <taxon>Eubacteriales</taxon>
        <taxon>Clostridiaceae</taxon>
        <taxon>Clostridium</taxon>
    </lineage>
</organism>
<keyword id="KW-0028">Amino-acid biosynthesis</keyword>
<keyword id="KW-0057">Aromatic amino acid biosynthesis</keyword>
<keyword id="KW-0456">Lyase</keyword>
<keyword id="KW-0822">Tryptophan biosynthesis</keyword>
<evidence type="ECO:0000255" key="1">
    <source>
        <dbReference type="HAMAP-Rule" id="MF_00131"/>
    </source>
</evidence>
<comment type="function">
    <text evidence="1">The alpha subunit is responsible for the aldol cleavage of indoleglycerol phosphate to indole and glyceraldehyde 3-phosphate.</text>
</comment>
<comment type="catalytic activity">
    <reaction evidence="1">
        <text>(1S,2R)-1-C-(indol-3-yl)glycerol 3-phosphate + L-serine = D-glyceraldehyde 3-phosphate + L-tryptophan + H2O</text>
        <dbReference type="Rhea" id="RHEA:10532"/>
        <dbReference type="ChEBI" id="CHEBI:15377"/>
        <dbReference type="ChEBI" id="CHEBI:33384"/>
        <dbReference type="ChEBI" id="CHEBI:57912"/>
        <dbReference type="ChEBI" id="CHEBI:58866"/>
        <dbReference type="ChEBI" id="CHEBI:59776"/>
        <dbReference type="EC" id="4.2.1.20"/>
    </reaction>
</comment>
<comment type="pathway">
    <text evidence="1">Amino-acid biosynthesis; L-tryptophan biosynthesis; L-tryptophan from chorismate: step 5/5.</text>
</comment>
<comment type="subunit">
    <text evidence="1">Tetramer of two alpha and two beta chains.</text>
</comment>
<comment type="similarity">
    <text evidence="1">Belongs to the TrpA family.</text>
</comment>
<name>TRPA_CLOB8</name>
<sequence length="258" mass="28321">MNRIDLSFNKVKEENRKALIPFVTCGADFTVEETADLIVSLEKEGATIVEIGVPFRDPLADGPVIQNAYTKALQNGTKVKDVFRCVELIRGKSEVPIVLMVYFNVVYFTGVENFLRIAAKSGVDGLIVPDVPLEERGDLDKICEDNCIYLIPLVARTSKDRIAAITKGAKGFVYCVSTNGTTGERKTLDSGTHEYLEEVRKNVDIPMCIGFGISSKEVVKEVKDYCDGVIVGSAIVKRMAEGKEAVIDFVKDLSDGLK</sequence>
<proteinExistence type="inferred from homology"/>
<dbReference type="EC" id="4.2.1.20" evidence="1"/>
<dbReference type="EMBL" id="CP000721">
    <property type="protein sequence ID" value="ABR33927.1"/>
    <property type="molecule type" value="Genomic_DNA"/>
</dbReference>
<dbReference type="RefSeq" id="WP_011969079.1">
    <property type="nucleotide sequence ID" value="NC_009617.1"/>
</dbReference>
<dbReference type="SMR" id="A6LU97"/>
<dbReference type="KEGG" id="cbe:Cbei_1755"/>
<dbReference type="eggNOG" id="COG0159">
    <property type="taxonomic scope" value="Bacteria"/>
</dbReference>
<dbReference type="HOGENOM" id="CLU_016734_0_0_9"/>
<dbReference type="UniPathway" id="UPA00035">
    <property type="reaction ID" value="UER00044"/>
</dbReference>
<dbReference type="Proteomes" id="UP000000565">
    <property type="component" value="Chromosome"/>
</dbReference>
<dbReference type="GO" id="GO:0005829">
    <property type="term" value="C:cytosol"/>
    <property type="evidence" value="ECO:0007669"/>
    <property type="project" value="TreeGrafter"/>
</dbReference>
<dbReference type="GO" id="GO:0004834">
    <property type="term" value="F:tryptophan synthase activity"/>
    <property type="evidence" value="ECO:0007669"/>
    <property type="project" value="UniProtKB-UniRule"/>
</dbReference>
<dbReference type="CDD" id="cd04724">
    <property type="entry name" value="Tryptophan_synthase_alpha"/>
    <property type="match status" value="1"/>
</dbReference>
<dbReference type="FunFam" id="3.20.20.70:FF:000037">
    <property type="entry name" value="Tryptophan synthase alpha chain"/>
    <property type="match status" value="1"/>
</dbReference>
<dbReference type="Gene3D" id="3.20.20.70">
    <property type="entry name" value="Aldolase class I"/>
    <property type="match status" value="1"/>
</dbReference>
<dbReference type="HAMAP" id="MF_00131">
    <property type="entry name" value="Trp_synth_alpha"/>
    <property type="match status" value="1"/>
</dbReference>
<dbReference type="InterPro" id="IPR013785">
    <property type="entry name" value="Aldolase_TIM"/>
</dbReference>
<dbReference type="InterPro" id="IPR011060">
    <property type="entry name" value="RibuloseP-bd_barrel"/>
</dbReference>
<dbReference type="InterPro" id="IPR002028">
    <property type="entry name" value="Trp_synthase_suA"/>
</dbReference>
<dbReference type="NCBIfam" id="TIGR00262">
    <property type="entry name" value="trpA"/>
    <property type="match status" value="1"/>
</dbReference>
<dbReference type="PANTHER" id="PTHR43406:SF1">
    <property type="entry name" value="TRYPTOPHAN SYNTHASE ALPHA CHAIN, CHLOROPLASTIC"/>
    <property type="match status" value="1"/>
</dbReference>
<dbReference type="PANTHER" id="PTHR43406">
    <property type="entry name" value="TRYPTOPHAN SYNTHASE, ALPHA CHAIN"/>
    <property type="match status" value="1"/>
</dbReference>
<dbReference type="Pfam" id="PF00290">
    <property type="entry name" value="Trp_syntA"/>
    <property type="match status" value="1"/>
</dbReference>
<dbReference type="SUPFAM" id="SSF51366">
    <property type="entry name" value="Ribulose-phoshate binding barrel"/>
    <property type="match status" value="1"/>
</dbReference>
<gene>
    <name evidence="1" type="primary">trpA</name>
    <name type="ordered locus">Cbei_1755</name>
</gene>